<organism>
    <name type="scientific">Rickettsia typhi (strain ATCC VR-144 / Wilmington)</name>
    <dbReference type="NCBI Taxonomy" id="257363"/>
    <lineage>
        <taxon>Bacteria</taxon>
        <taxon>Pseudomonadati</taxon>
        <taxon>Pseudomonadota</taxon>
        <taxon>Alphaproteobacteria</taxon>
        <taxon>Rickettsiales</taxon>
        <taxon>Rickettsiaceae</taxon>
        <taxon>Rickettsieae</taxon>
        <taxon>Rickettsia</taxon>
        <taxon>typhus group</taxon>
    </lineage>
</organism>
<sequence length="294" mass="34445">MHNTTKRVTVPALEAMLYETIKVLDHGFIRVIDYMGDDSSIVQAARVSYGKGTKQLNQDKGLINYLLRHYHTTPFEMCDIKFHIKLPIFIARQWIRHRTASVNEYSARYSILGNEFYLPEPTDIASQSAINKQCRAGDSLPKKVSEKVLAILEEDARRCYMHYKELMNADEDGNIIDENVAGIARELARMNLTLNYYTEWYWKINLHNLLHFLRLRTDSKAQYEIRVYAGKILDIVKAWVPFTYEAFEEYRLQGANISRKGLEVIKRMIQGEKVIHETSGMNKREWEELVKIFR</sequence>
<evidence type="ECO:0000255" key="1">
    <source>
        <dbReference type="HAMAP-Rule" id="MF_01408"/>
    </source>
</evidence>
<evidence type="ECO:0000255" key="2">
    <source>
        <dbReference type="PROSITE-ProRule" id="PRU00661"/>
    </source>
</evidence>
<keyword id="KW-0274">FAD</keyword>
<keyword id="KW-0285">Flavoprotein</keyword>
<keyword id="KW-0489">Methyltransferase</keyword>
<keyword id="KW-0521">NADP</keyword>
<keyword id="KW-0545">Nucleotide biosynthesis</keyword>
<keyword id="KW-0808">Transferase</keyword>
<feature type="chain" id="PRO_0000175574" description="Flavin-dependent thymidylate synthase">
    <location>
        <begin position="1"/>
        <end position="294"/>
    </location>
</feature>
<feature type="domain" description="ThyX" evidence="2">
    <location>
        <begin position="27"/>
        <end position="250"/>
    </location>
</feature>
<feature type="short sequence motif" description="ThyX motif" evidence="1">
    <location>
        <begin position="96"/>
        <end position="106"/>
    </location>
</feature>
<feature type="active site" description="Involved in ionization of N3 of dUMP, leading to its activation" evidence="1">
    <location>
        <position position="216"/>
    </location>
</feature>
<feature type="binding site" evidence="1">
    <location>
        <position position="73"/>
    </location>
    <ligand>
        <name>FAD</name>
        <dbReference type="ChEBI" id="CHEBI:57692"/>
        <note>ligand shared between neighboring subunits</note>
    </ligand>
</feature>
<feature type="binding site" evidence="1">
    <location>
        <begin position="93"/>
        <end position="96"/>
    </location>
    <ligand>
        <name>dUMP</name>
        <dbReference type="ChEBI" id="CHEBI:246422"/>
        <note>ligand shared between dimeric partners</note>
    </ligand>
</feature>
<feature type="binding site" evidence="1">
    <location>
        <begin position="96"/>
        <end position="98"/>
    </location>
    <ligand>
        <name>FAD</name>
        <dbReference type="ChEBI" id="CHEBI:57692"/>
        <note>ligand shared between neighboring subunits</note>
    </ligand>
</feature>
<feature type="binding site" description="in other chain" evidence="1">
    <location>
        <begin position="104"/>
        <end position="108"/>
    </location>
    <ligand>
        <name>dUMP</name>
        <dbReference type="ChEBI" id="CHEBI:246422"/>
        <note>ligand shared between dimeric partners</note>
    </ligand>
</feature>
<feature type="binding site" evidence="1">
    <location>
        <position position="104"/>
    </location>
    <ligand>
        <name>FAD</name>
        <dbReference type="ChEBI" id="CHEBI:57692"/>
        <note>ligand shared between neighboring subunits</note>
    </ligand>
</feature>
<feature type="binding site" description="in other chain" evidence="1">
    <location>
        <position position="189"/>
    </location>
    <ligand>
        <name>dUMP</name>
        <dbReference type="ChEBI" id="CHEBI:246422"/>
        <note>ligand shared between dimeric partners</note>
    </ligand>
</feature>
<feature type="binding site" evidence="1">
    <location>
        <begin position="205"/>
        <end position="207"/>
    </location>
    <ligand>
        <name>FAD</name>
        <dbReference type="ChEBI" id="CHEBI:57692"/>
        <note>ligand shared between neighboring subunits</note>
    </ligand>
</feature>
<feature type="binding site" evidence="1">
    <location>
        <position position="211"/>
    </location>
    <ligand>
        <name>FAD</name>
        <dbReference type="ChEBI" id="CHEBI:57692"/>
        <note>ligand shared between neighboring subunits</note>
    </ligand>
</feature>
<feature type="binding site" evidence="1">
    <location>
        <position position="216"/>
    </location>
    <ligand>
        <name>dUMP</name>
        <dbReference type="ChEBI" id="CHEBI:246422"/>
        <note>ligand shared between dimeric partners</note>
    </ligand>
</feature>
<name>THYX_RICTY</name>
<comment type="function">
    <text evidence="1">Catalyzes the reductive methylation of 2'-deoxyuridine-5'-monophosphate (dUMP) to 2'-deoxythymidine-5'-monophosphate (dTMP) while utilizing 5,10-methylenetetrahydrofolate (mTHF) as the methyl donor, and NADPH and FADH(2) as the reductant.</text>
</comment>
<comment type="catalytic activity">
    <reaction evidence="1">
        <text>dUMP + (6R)-5,10-methylene-5,6,7,8-tetrahydrofolate + NADPH + H(+) = dTMP + (6S)-5,6,7,8-tetrahydrofolate + NADP(+)</text>
        <dbReference type="Rhea" id="RHEA:29043"/>
        <dbReference type="ChEBI" id="CHEBI:15378"/>
        <dbReference type="ChEBI" id="CHEBI:15636"/>
        <dbReference type="ChEBI" id="CHEBI:57453"/>
        <dbReference type="ChEBI" id="CHEBI:57783"/>
        <dbReference type="ChEBI" id="CHEBI:58349"/>
        <dbReference type="ChEBI" id="CHEBI:63528"/>
        <dbReference type="ChEBI" id="CHEBI:246422"/>
        <dbReference type="EC" id="2.1.1.148"/>
    </reaction>
</comment>
<comment type="cofactor">
    <cofactor evidence="1">
        <name>FAD</name>
        <dbReference type="ChEBI" id="CHEBI:57692"/>
    </cofactor>
    <text evidence="1">Binds 4 FAD per tetramer. Each FAD binding site is formed by three monomers.</text>
</comment>
<comment type="pathway">
    <text evidence="1">Pyrimidine metabolism; dTTP biosynthesis.</text>
</comment>
<comment type="subunit">
    <text evidence="1">Homotetramer.</text>
</comment>
<comment type="similarity">
    <text evidence="1">Belongs to the thymidylate synthase ThyX family.</text>
</comment>
<reference key="1">
    <citation type="journal article" date="2004" name="J. Bacteriol.">
        <title>Complete genome sequence of Rickettsia typhi and comparison with sequences of other Rickettsiae.</title>
        <authorList>
            <person name="McLeod M.P."/>
            <person name="Qin X."/>
            <person name="Karpathy S.E."/>
            <person name="Gioia J."/>
            <person name="Highlander S.K."/>
            <person name="Fox G.E."/>
            <person name="McNeill T.Z."/>
            <person name="Jiang H."/>
            <person name="Muzny D."/>
            <person name="Jacob L.S."/>
            <person name="Hawes A.C."/>
            <person name="Sodergren E."/>
            <person name="Gill R."/>
            <person name="Hume J."/>
            <person name="Morgan M."/>
            <person name="Fan G."/>
            <person name="Amin A.G."/>
            <person name="Gibbs R.A."/>
            <person name="Hong C."/>
            <person name="Yu X.-J."/>
            <person name="Walker D.H."/>
            <person name="Weinstock G.M."/>
        </authorList>
    </citation>
    <scope>NUCLEOTIDE SEQUENCE [LARGE SCALE GENOMIC DNA]</scope>
    <source>
        <strain>ATCC VR-144 / Wilmington</strain>
    </source>
</reference>
<dbReference type="EC" id="2.1.1.148" evidence="1"/>
<dbReference type="EMBL" id="AE017197">
    <property type="protein sequence ID" value="AAU03772.1"/>
    <property type="molecule type" value="Genomic_DNA"/>
</dbReference>
<dbReference type="RefSeq" id="WP_011190756.1">
    <property type="nucleotide sequence ID" value="NC_006142.1"/>
</dbReference>
<dbReference type="SMR" id="Q68X70"/>
<dbReference type="KEGG" id="rty:RT0292"/>
<dbReference type="eggNOG" id="COG1351">
    <property type="taxonomic scope" value="Bacteria"/>
</dbReference>
<dbReference type="HOGENOM" id="CLU_067790_0_0_5"/>
<dbReference type="OrthoDB" id="9774464at2"/>
<dbReference type="UniPathway" id="UPA00575"/>
<dbReference type="Proteomes" id="UP000000604">
    <property type="component" value="Chromosome"/>
</dbReference>
<dbReference type="GO" id="GO:0050660">
    <property type="term" value="F:flavin adenine dinucleotide binding"/>
    <property type="evidence" value="ECO:0007669"/>
    <property type="project" value="InterPro"/>
</dbReference>
<dbReference type="GO" id="GO:0070402">
    <property type="term" value="F:NADPH binding"/>
    <property type="evidence" value="ECO:0007669"/>
    <property type="project" value="TreeGrafter"/>
</dbReference>
<dbReference type="GO" id="GO:0050797">
    <property type="term" value="F:thymidylate synthase (FAD) activity"/>
    <property type="evidence" value="ECO:0007669"/>
    <property type="project" value="UniProtKB-UniRule"/>
</dbReference>
<dbReference type="GO" id="GO:0004799">
    <property type="term" value="F:thymidylate synthase activity"/>
    <property type="evidence" value="ECO:0007669"/>
    <property type="project" value="TreeGrafter"/>
</dbReference>
<dbReference type="GO" id="GO:0006231">
    <property type="term" value="P:dTMP biosynthetic process"/>
    <property type="evidence" value="ECO:0007669"/>
    <property type="project" value="UniProtKB-UniRule"/>
</dbReference>
<dbReference type="GO" id="GO:0006235">
    <property type="term" value="P:dTTP biosynthetic process"/>
    <property type="evidence" value="ECO:0007669"/>
    <property type="project" value="UniProtKB-UniRule"/>
</dbReference>
<dbReference type="GO" id="GO:0032259">
    <property type="term" value="P:methylation"/>
    <property type="evidence" value="ECO:0007669"/>
    <property type="project" value="UniProtKB-KW"/>
</dbReference>
<dbReference type="CDD" id="cd20175">
    <property type="entry name" value="ThyX"/>
    <property type="match status" value="1"/>
</dbReference>
<dbReference type="Gene3D" id="3.30.1360.170">
    <property type="match status" value="1"/>
</dbReference>
<dbReference type="HAMAP" id="MF_01408">
    <property type="entry name" value="ThyX"/>
    <property type="match status" value="1"/>
</dbReference>
<dbReference type="InterPro" id="IPR003669">
    <property type="entry name" value="Thymidylate_synthase_ThyX"/>
</dbReference>
<dbReference type="InterPro" id="IPR036098">
    <property type="entry name" value="Thymidylate_synthase_ThyX_sf"/>
</dbReference>
<dbReference type="NCBIfam" id="TIGR02170">
    <property type="entry name" value="thyX"/>
    <property type="match status" value="1"/>
</dbReference>
<dbReference type="PANTHER" id="PTHR34934">
    <property type="entry name" value="FLAVIN-DEPENDENT THYMIDYLATE SYNTHASE"/>
    <property type="match status" value="1"/>
</dbReference>
<dbReference type="PANTHER" id="PTHR34934:SF1">
    <property type="entry name" value="FLAVIN-DEPENDENT THYMIDYLATE SYNTHASE"/>
    <property type="match status" value="1"/>
</dbReference>
<dbReference type="Pfam" id="PF02511">
    <property type="entry name" value="Thy1"/>
    <property type="match status" value="1"/>
</dbReference>
<dbReference type="SUPFAM" id="SSF69796">
    <property type="entry name" value="Thymidylate synthase-complementing protein Thy1"/>
    <property type="match status" value="1"/>
</dbReference>
<dbReference type="PROSITE" id="PS51331">
    <property type="entry name" value="THYX"/>
    <property type="match status" value="1"/>
</dbReference>
<protein>
    <recommendedName>
        <fullName evidence="1">Flavin-dependent thymidylate synthase</fullName>
        <shortName evidence="1">FDTS</shortName>
        <ecNumber evidence="1">2.1.1.148</ecNumber>
    </recommendedName>
    <alternativeName>
        <fullName evidence="1">FAD-dependent thymidylate synthase</fullName>
    </alternativeName>
    <alternativeName>
        <fullName evidence="1">Thymidylate synthase ThyX</fullName>
        <shortName evidence="1">TS</shortName>
        <shortName evidence="1">TSase</shortName>
    </alternativeName>
</protein>
<gene>
    <name evidence="1" type="primary">thyX</name>
    <name type="ordered locus">RT0292</name>
</gene>
<proteinExistence type="inferred from homology"/>
<accession>Q68X70</accession>